<proteinExistence type="evidence at transcript level"/>
<feature type="chain" id="PRO_0000144111" description="Kappa-casein">
    <location>
        <begin position="1" status="less than"/>
        <end position="145"/>
    </location>
</feature>
<feature type="modified residue" description="Phosphothreonine" evidence="1">
    <location>
        <position position="121"/>
    </location>
</feature>
<feature type="modified residue" description="Phosphoserine; alternate" evidence="1">
    <location>
        <position position="125"/>
    </location>
</feature>
<feature type="modified residue" description="Phosphoserine" evidence="2">
    <location>
        <position position="142"/>
    </location>
</feature>
<feature type="glycosylation site" description="N-linked (GlcNAc...) asparagine" evidence="3">
    <location>
        <position position="91"/>
    </location>
</feature>
<feature type="glycosylation site" description="O-linked (GalNAc...) threonine" evidence="1">
    <location>
        <position position="107"/>
    </location>
</feature>
<feature type="glycosylation site" description="O-linked (GalNAc...) threonine" evidence="1">
    <location>
        <position position="112"/>
    </location>
</feature>
<feature type="glycosylation site" description="O-linked (GalNAc...) threonine" evidence="1">
    <location>
        <position position="118"/>
    </location>
</feature>
<feature type="glycosylation site" description="O-linked (GalNAc...) serine; alternate" evidence="1">
    <location>
        <position position="125"/>
    </location>
</feature>
<feature type="glycosylation site" description="O-linked (GalNAc...) threonine" evidence="1">
    <location>
        <position position="141"/>
    </location>
</feature>
<feature type="non-terminal residue">
    <location>
        <position position="1"/>
    </location>
</feature>
<protein>
    <recommendedName>
        <fullName>Kappa-casein</fullName>
    </recommendedName>
</protein>
<name>CASK_HIPAM</name>
<organism>
    <name type="scientific">Hippopotamus amphibius</name>
    <name type="common">Hippopotamus</name>
    <dbReference type="NCBI Taxonomy" id="9833"/>
    <lineage>
        <taxon>Eukaryota</taxon>
        <taxon>Metazoa</taxon>
        <taxon>Chordata</taxon>
        <taxon>Craniata</taxon>
        <taxon>Vertebrata</taxon>
        <taxon>Euteleostomi</taxon>
        <taxon>Mammalia</taxon>
        <taxon>Eutheria</taxon>
        <taxon>Laurasiatheria</taxon>
        <taxon>Artiodactyla</taxon>
        <taxon>Whippomorpha</taxon>
        <taxon>Ancodonta</taxon>
        <taxon>Hippopotamidae</taxon>
        <taxon>Hippopotamus</taxon>
    </lineage>
</organism>
<accession>Q28441</accession>
<evidence type="ECO:0000250" key="1">
    <source>
        <dbReference type="UniProtKB" id="P02668"/>
    </source>
</evidence>
<evidence type="ECO:0000250" key="2">
    <source>
        <dbReference type="UniProtKB" id="P02670"/>
    </source>
</evidence>
<evidence type="ECO:0000255" key="3"/>
<evidence type="ECO:0000305" key="4"/>
<sequence>CFNGKTVKYIPVHYVMSRYPKYGLNYYQCRPAALINNQFMPYPYYAKPVAVKPHAQIPQWQALPDINPPTVPCRRRPHPSFLAIPPXKDQNKTVIPIINTIATXEPTLIPTTEPIVNTVVTTEASSEFITSTPETTTVQVTSPVV</sequence>
<gene>
    <name type="primary">CSN3</name>
    <name type="synonym">CSN10</name>
    <name type="synonym">CSNK</name>
</gene>
<reference key="1">
    <citation type="journal article" date="1996" name="Mol. Biol. Evol.">
        <title>Evidence from milk casein genes that cetaceans are close relatives of hippopotamid artiodactyls.</title>
        <authorList>
            <person name="Gatesy J."/>
            <person name="Hayashi C."/>
            <person name="Cronin M.A."/>
            <person name="Arctander P."/>
        </authorList>
    </citation>
    <scope>NUCLEOTIDE SEQUENCE [GENOMIC DNA]</scope>
</reference>
<keyword id="KW-0325">Glycoprotein</keyword>
<keyword id="KW-0494">Milk protein</keyword>
<keyword id="KW-0597">Phosphoprotein</keyword>
<keyword id="KW-0964">Secreted</keyword>
<dbReference type="EMBL" id="U53889">
    <property type="protein sequence ID" value="AAB08413.1"/>
    <property type="molecule type" value="Genomic_DNA"/>
</dbReference>
<dbReference type="GlyCosmos" id="Q28441">
    <property type="glycosylation" value="6 sites, No reported glycans"/>
</dbReference>
<dbReference type="GO" id="GO:0005615">
    <property type="term" value="C:extracellular space"/>
    <property type="evidence" value="ECO:0007669"/>
    <property type="project" value="TreeGrafter"/>
</dbReference>
<dbReference type="GO" id="GO:0007595">
    <property type="term" value="P:lactation"/>
    <property type="evidence" value="ECO:0007669"/>
    <property type="project" value="TreeGrafter"/>
</dbReference>
<dbReference type="GO" id="GO:0050821">
    <property type="term" value="P:protein stabilization"/>
    <property type="evidence" value="ECO:0007669"/>
    <property type="project" value="TreeGrafter"/>
</dbReference>
<dbReference type="InterPro" id="IPR000117">
    <property type="entry name" value="Casein_kappa"/>
</dbReference>
<dbReference type="PANTHER" id="PTHR11470">
    <property type="entry name" value="KAPPA CASEIN"/>
    <property type="match status" value="1"/>
</dbReference>
<dbReference type="PANTHER" id="PTHR11470:SF2">
    <property type="entry name" value="KAPPA-CASEIN"/>
    <property type="match status" value="1"/>
</dbReference>
<dbReference type="Pfam" id="PF00997">
    <property type="entry name" value="Casein_kappa"/>
    <property type="match status" value="1"/>
</dbReference>
<comment type="function">
    <text>Kappa-casein stabilizes micelle formation, preventing casein precipitation in milk.</text>
</comment>
<comment type="subcellular location">
    <subcellularLocation>
        <location>Secreted</location>
    </subcellularLocation>
</comment>
<comment type="tissue specificity">
    <text>Mammary gland specific. Secreted in milk.</text>
</comment>
<comment type="similarity">
    <text evidence="4">Belongs to the kappa-casein family.</text>
</comment>